<keyword id="KW-0496">Mitochondrion</keyword>
<keyword id="KW-1185">Reference proteome</keyword>
<keyword id="KW-0677">Repeat</keyword>
<keyword id="KW-0809">Transit peptide</keyword>
<evidence type="ECO:0000255" key="1"/>
<evidence type="ECO:0000305" key="2"/>
<comment type="subcellular location">
    <subcellularLocation>
        <location evidence="2">Mitochondrion</location>
    </subcellularLocation>
</comment>
<comment type="similarity">
    <text evidence="2">Belongs to the PPR family. PCMP-H subfamily.</text>
</comment>
<comment type="online information" name="Pentatricopeptide repeat proteins">
    <link uri="https://ppr.plantenergy.uwa.edu.au"/>
</comment>
<proteinExistence type="inferred from homology"/>
<reference key="1">
    <citation type="journal article" date="2000" name="Nature">
        <title>Sequence and analysis of chromosome 1 of the plant Arabidopsis thaliana.</title>
        <authorList>
            <person name="Theologis A."/>
            <person name="Ecker J.R."/>
            <person name="Palm C.J."/>
            <person name="Federspiel N.A."/>
            <person name="Kaul S."/>
            <person name="White O."/>
            <person name="Alonso J."/>
            <person name="Altafi H."/>
            <person name="Araujo R."/>
            <person name="Bowman C.L."/>
            <person name="Brooks S.Y."/>
            <person name="Buehler E."/>
            <person name="Chan A."/>
            <person name="Chao Q."/>
            <person name="Chen H."/>
            <person name="Cheuk R.F."/>
            <person name="Chin C.W."/>
            <person name="Chung M.K."/>
            <person name="Conn L."/>
            <person name="Conway A.B."/>
            <person name="Conway A.R."/>
            <person name="Creasy T.H."/>
            <person name="Dewar K."/>
            <person name="Dunn P."/>
            <person name="Etgu P."/>
            <person name="Feldblyum T.V."/>
            <person name="Feng J.-D."/>
            <person name="Fong B."/>
            <person name="Fujii C.Y."/>
            <person name="Gill J.E."/>
            <person name="Goldsmith A.D."/>
            <person name="Haas B."/>
            <person name="Hansen N.F."/>
            <person name="Hughes B."/>
            <person name="Huizar L."/>
            <person name="Hunter J.L."/>
            <person name="Jenkins J."/>
            <person name="Johnson-Hopson C."/>
            <person name="Khan S."/>
            <person name="Khaykin E."/>
            <person name="Kim C.J."/>
            <person name="Koo H.L."/>
            <person name="Kremenetskaia I."/>
            <person name="Kurtz D.B."/>
            <person name="Kwan A."/>
            <person name="Lam B."/>
            <person name="Langin-Hooper S."/>
            <person name="Lee A."/>
            <person name="Lee J.M."/>
            <person name="Lenz C.A."/>
            <person name="Li J.H."/>
            <person name="Li Y.-P."/>
            <person name="Lin X."/>
            <person name="Liu S.X."/>
            <person name="Liu Z.A."/>
            <person name="Luros J.S."/>
            <person name="Maiti R."/>
            <person name="Marziali A."/>
            <person name="Militscher J."/>
            <person name="Miranda M."/>
            <person name="Nguyen M."/>
            <person name="Nierman W.C."/>
            <person name="Osborne B.I."/>
            <person name="Pai G."/>
            <person name="Peterson J."/>
            <person name="Pham P.K."/>
            <person name="Rizzo M."/>
            <person name="Rooney T."/>
            <person name="Rowley D."/>
            <person name="Sakano H."/>
            <person name="Salzberg S.L."/>
            <person name="Schwartz J.R."/>
            <person name="Shinn P."/>
            <person name="Southwick A.M."/>
            <person name="Sun H."/>
            <person name="Tallon L.J."/>
            <person name="Tambunga G."/>
            <person name="Toriumi M.J."/>
            <person name="Town C.D."/>
            <person name="Utterback T."/>
            <person name="Van Aken S."/>
            <person name="Vaysberg M."/>
            <person name="Vysotskaia V.S."/>
            <person name="Walker M."/>
            <person name="Wu D."/>
            <person name="Yu G."/>
            <person name="Fraser C.M."/>
            <person name="Venter J.C."/>
            <person name="Davis R.W."/>
        </authorList>
    </citation>
    <scope>NUCLEOTIDE SEQUENCE [LARGE SCALE GENOMIC DNA]</scope>
    <source>
        <strain>cv. Columbia</strain>
    </source>
</reference>
<reference key="2">
    <citation type="journal article" date="2017" name="Plant J.">
        <title>Araport11: a complete reannotation of the Arabidopsis thaliana reference genome.</title>
        <authorList>
            <person name="Cheng C.Y."/>
            <person name="Krishnakumar V."/>
            <person name="Chan A.P."/>
            <person name="Thibaud-Nissen F."/>
            <person name="Schobel S."/>
            <person name="Town C.D."/>
        </authorList>
    </citation>
    <scope>GENOME REANNOTATION</scope>
    <source>
        <strain>cv. Columbia</strain>
    </source>
</reference>
<reference key="3">
    <citation type="journal article" date="2004" name="Plant Cell">
        <title>Genome-wide analysis of Arabidopsis pentatricopeptide repeat proteins reveals their essential role in organelle biogenesis.</title>
        <authorList>
            <person name="Lurin C."/>
            <person name="Andres C."/>
            <person name="Aubourg S."/>
            <person name="Bellaoui M."/>
            <person name="Bitton F."/>
            <person name="Bruyere C."/>
            <person name="Caboche M."/>
            <person name="Debast C."/>
            <person name="Gualberto J."/>
            <person name="Hoffmann B."/>
            <person name="Lecharny A."/>
            <person name="Le Ret M."/>
            <person name="Martin-Magniette M.-L."/>
            <person name="Mireau H."/>
            <person name="Peeters N."/>
            <person name="Renou J.-P."/>
            <person name="Szurek B."/>
            <person name="Taconnat L."/>
            <person name="Small I."/>
        </authorList>
    </citation>
    <scope>GENE FAMILY</scope>
</reference>
<sequence length="475" mass="53813">MVRLWCGKLRLWKPYLALATQSRNSWFCSGGGAPSHHLHILKKYGSSEITEMINRYKRNVAGHTLTQNSMVGQYKTTVSPSVAQNVTIETFDSLCIQGNWREAVEVLDYLENKGYAMDLIRLLGLAKLCGKPEALEAARVVHECIIALVSPCDVGARNAIIEMYSGCCSVDDALKVFEEMPEWNSGTLCVMMRCFVNNGYGEEAIDLFTRFKEEGNKPNGEIFNQVFSTCTLTGDVKEGSLQFQAMYREYGIVPSMEHYHSVTKMLATSGHLDEALNFVERMPMEPSVDVWETLMNLSRVHGDVELGDRCAELVEKLDATRLDKVSSAGLVATKASDFVKKEPSTRSEPYFYSTFRPVDSSHPQMNIIYETLMSLRSQLKEMGYVPDTRYYRSLIMAMENKEQIFGYREEIAVVESLLKSKPRSAITLLTNIRIVGDCHDMMKLMSVITGRDMIKRDAKIYHLFKNGVCRCNNLW</sequence>
<accession>Q9C6G2</accession>
<accession>Q9C7N1</accession>
<protein>
    <recommendedName>
        <fullName>Pentatricopeptide repeat-containing protein At1g29710, mitochondrial</fullName>
    </recommendedName>
</protein>
<organism>
    <name type="scientific">Arabidopsis thaliana</name>
    <name type="common">Mouse-ear cress</name>
    <dbReference type="NCBI Taxonomy" id="3702"/>
    <lineage>
        <taxon>Eukaryota</taxon>
        <taxon>Viridiplantae</taxon>
        <taxon>Streptophyta</taxon>
        <taxon>Embryophyta</taxon>
        <taxon>Tracheophyta</taxon>
        <taxon>Spermatophyta</taxon>
        <taxon>Magnoliopsida</taxon>
        <taxon>eudicotyledons</taxon>
        <taxon>Gunneridae</taxon>
        <taxon>Pentapetalae</taxon>
        <taxon>rosids</taxon>
        <taxon>malvids</taxon>
        <taxon>Brassicales</taxon>
        <taxon>Brassicaceae</taxon>
        <taxon>Camelineae</taxon>
        <taxon>Arabidopsis</taxon>
    </lineage>
</organism>
<name>PPR63_ARATH</name>
<feature type="transit peptide" description="Mitochondrion" evidence="1">
    <location>
        <begin position="1"/>
        <end position="37"/>
    </location>
</feature>
<feature type="chain" id="PRO_0000342804" description="Pentatricopeptide repeat-containing protein At1g29710, mitochondrial">
    <location>
        <begin position="38"/>
        <end position="475"/>
    </location>
</feature>
<feature type="repeat" description="PPR 1">
    <location>
        <begin position="83"/>
        <end position="117"/>
    </location>
</feature>
<feature type="repeat" description="PPR 2">
    <location>
        <begin position="118"/>
        <end position="148"/>
    </location>
</feature>
<feature type="repeat" description="PPR 3">
    <location>
        <begin position="153"/>
        <end position="183"/>
    </location>
</feature>
<feature type="repeat" description="PPR 4">
    <location>
        <begin position="184"/>
        <end position="218"/>
    </location>
</feature>
<feature type="repeat" description="PPR 5">
    <location>
        <begin position="219"/>
        <end position="254"/>
    </location>
</feature>
<feature type="repeat" description="PPR 6">
    <location>
        <begin position="255"/>
        <end position="285"/>
    </location>
</feature>
<feature type="region of interest" description="Type E(+) motif">
    <location>
        <begin position="350"/>
        <end position="380"/>
    </location>
</feature>
<feature type="region of interest" description="Type DYW motif">
    <location>
        <begin position="381"/>
        <end position="475"/>
    </location>
</feature>
<gene>
    <name type="primary">PCMP-H67</name>
    <name type="ordered locus">At1g29710</name>
    <name type="ORF">F15D2.39</name>
    <name type="ORF">T3M22.4</name>
</gene>
<dbReference type="EMBL" id="AC068667">
    <property type="protein sequence ID" value="AAG51730.1"/>
    <property type="molecule type" value="Genomic_DNA"/>
</dbReference>
<dbReference type="EMBL" id="AC079288">
    <property type="protein sequence ID" value="AAG50776.1"/>
    <property type="molecule type" value="Genomic_DNA"/>
</dbReference>
<dbReference type="EMBL" id="CP002684">
    <property type="protein sequence ID" value="AEE31120.1"/>
    <property type="molecule type" value="Genomic_DNA"/>
</dbReference>
<dbReference type="PIR" id="E86420">
    <property type="entry name" value="E86420"/>
</dbReference>
<dbReference type="RefSeq" id="NP_174264.1">
    <property type="nucleotide sequence ID" value="NM_102711.2"/>
</dbReference>
<dbReference type="SMR" id="Q9C6G2"/>
<dbReference type="FunCoup" id="Q9C6G2">
    <property type="interactions" value="31"/>
</dbReference>
<dbReference type="STRING" id="3702.Q9C6G2"/>
<dbReference type="iPTMnet" id="Q9C6G2"/>
<dbReference type="PaxDb" id="3702-AT1G29710.1"/>
<dbReference type="ProteomicsDB" id="225979"/>
<dbReference type="EnsemblPlants" id="AT1G29710.1">
    <property type="protein sequence ID" value="AT1G29710.1"/>
    <property type="gene ID" value="AT1G29710"/>
</dbReference>
<dbReference type="GeneID" id="839848"/>
<dbReference type="Gramene" id="AT1G29710.1">
    <property type="protein sequence ID" value="AT1G29710.1"/>
    <property type="gene ID" value="AT1G29710"/>
</dbReference>
<dbReference type="KEGG" id="ath:AT1G29710"/>
<dbReference type="Araport" id="AT1G29710"/>
<dbReference type="TAIR" id="AT1G29710">
    <property type="gene designation" value="DYW4"/>
</dbReference>
<dbReference type="eggNOG" id="KOG4197">
    <property type="taxonomic scope" value="Eukaryota"/>
</dbReference>
<dbReference type="HOGENOM" id="CLU_002706_37_1_1"/>
<dbReference type="InParanoid" id="Q9C6G2"/>
<dbReference type="OMA" id="PSMEHYH"/>
<dbReference type="PhylomeDB" id="Q9C6G2"/>
<dbReference type="PRO" id="PR:Q9C6G2"/>
<dbReference type="Proteomes" id="UP000006548">
    <property type="component" value="Chromosome 1"/>
</dbReference>
<dbReference type="ExpressionAtlas" id="Q9C6G2">
    <property type="expression patterns" value="baseline and differential"/>
</dbReference>
<dbReference type="GO" id="GO:0005739">
    <property type="term" value="C:mitochondrion"/>
    <property type="evidence" value="ECO:0007669"/>
    <property type="project" value="UniProtKB-SubCell"/>
</dbReference>
<dbReference type="GO" id="GO:0003723">
    <property type="term" value="F:RNA binding"/>
    <property type="evidence" value="ECO:0007669"/>
    <property type="project" value="InterPro"/>
</dbReference>
<dbReference type="GO" id="GO:0008270">
    <property type="term" value="F:zinc ion binding"/>
    <property type="evidence" value="ECO:0007669"/>
    <property type="project" value="InterPro"/>
</dbReference>
<dbReference type="GO" id="GO:0009451">
    <property type="term" value="P:RNA modification"/>
    <property type="evidence" value="ECO:0007669"/>
    <property type="project" value="InterPro"/>
</dbReference>
<dbReference type="Gene3D" id="1.25.40.10">
    <property type="entry name" value="Tetratricopeptide repeat domain"/>
    <property type="match status" value="1"/>
</dbReference>
<dbReference type="InterPro" id="IPR032867">
    <property type="entry name" value="DYW_dom"/>
</dbReference>
<dbReference type="InterPro" id="IPR002885">
    <property type="entry name" value="Pentatricopeptide_rpt"/>
</dbReference>
<dbReference type="InterPro" id="IPR046960">
    <property type="entry name" value="PPR_At4g14850-like_plant"/>
</dbReference>
<dbReference type="InterPro" id="IPR011990">
    <property type="entry name" value="TPR-like_helical_dom_sf"/>
</dbReference>
<dbReference type="NCBIfam" id="TIGR00756">
    <property type="entry name" value="PPR"/>
    <property type="match status" value="1"/>
</dbReference>
<dbReference type="PANTHER" id="PTHR47926:SF388">
    <property type="entry name" value="DYW DOMAIN-CONTAINING PROTEIN"/>
    <property type="match status" value="1"/>
</dbReference>
<dbReference type="PANTHER" id="PTHR47926">
    <property type="entry name" value="PENTATRICOPEPTIDE REPEAT-CONTAINING PROTEIN"/>
    <property type="match status" value="1"/>
</dbReference>
<dbReference type="Pfam" id="PF14432">
    <property type="entry name" value="DYW_deaminase"/>
    <property type="match status" value="1"/>
</dbReference>
<dbReference type="Pfam" id="PF01535">
    <property type="entry name" value="PPR"/>
    <property type="match status" value="3"/>
</dbReference>
<dbReference type="PROSITE" id="PS51375">
    <property type="entry name" value="PPR"/>
    <property type="match status" value="5"/>
</dbReference>